<reference key="1">
    <citation type="journal article" date="1988" name="J. Gen. Virol.">
        <title>Molecular cloning and complete nucleotide sequence of an adult T cell leukaemia virus/human T cell leukaemia virus type I (ATLV/HTLV-I) isolate of Caribbean origin: relationship to other members of the ATLV/HTLV-I subgroup.</title>
        <authorList>
            <person name="Malik K.T.A."/>
            <person name="Even J."/>
            <person name="Karpas A."/>
        </authorList>
    </citation>
    <scope>NUCLEOTIDE SEQUENCE [GENOMIC DNA]</scope>
</reference>
<protein>
    <recommendedName>
        <fullName>Gag-Pro-Pol polyprotein</fullName>
    </recommendedName>
    <alternativeName>
        <fullName>Pr160Gag-Pro-Pol</fullName>
    </alternativeName>
    <component>
        <recommendedName>
            <fullName>Matrix protein p19</fullName>
            <shortName>MA</shortName>
        </recommendedName>
    </component>
    <component>
        <recommendedName>
            <fullName>Capsid protein p24</fullName>
            <shortName>CA</shortName>
        </recommendedName>
    </component>
    <component>
        <recommendedName>
            <fullName>Nucleocapsid protein p15-pro</fullName>
            <shortName>NC'</shortName>
            <shortName>NC-pro</shortName>
        </recommendedName>
    </component>
    <component>
        <recommendedName>
            <fullName>Protease</fullName>
            <shortName>PR</shortName>
            <ecNumber evidence="7">3.4.23.-</ecNumber>
        </recommendedName>
    </component>
    <component>
        <recommendedName>
            <fullName>p1</fullName>
        </recommendedName>
    </component>
    <component>
        <recommendedName>
            <fullName>Reverse transcriptase/ribonuclease H, p49 subunit</fullName>
            <shortName>p49 RT</shortName>
            <ecNumber evidence="8">2.7.7.49</ecNumber>
            <ecNumber evidence="8">2.7.7.7</ecNumber>
            <ecNumber evidence="9">3.1.26.4</ecNumber>
        </recommendedName>
    </component>
    <component>
        <recommendedName>
            <fullName>Reverse transcriptase/ribonuclease H, p62 subunit</fullName>
            <shortName>p62 RT</shortName>
            <ecNumber evidence="8">2.7.7.49</ecNumber>
            <ecNumber evidence="8">2.7.7.7</ecNumber>
            <ecNumber evidence="9">3.1.26.4</ecNumber>
        </recommendedName>
    </component>
    <component>
        <recommendedName>
            <fullName>Integrase</fullName>
            <shortName>IN</shortName>
            <ecNumber evidence="4">2.7.7.-</ecNumber>
            <ecNumber evidence="4">3.1.-.-</ecNumber>
        </recommendedName>
    </component>
</protein>
<keyword id="KW-0002">3D-structure</keyword>
<keyword id="KW-0064">Aspartyl protease</keyword>
<keyword id="KW-0167">Capsid protein</keyword>
<keyword id="KW-0229">DNA integration</keyword>
<keyword id="KW-0233">DNA recombination</keyword>
<keyword id="KW-0238">DNA-binding</keyword>
<keyword id="KW-0255">Endonuclease</keyword>
<keyword id="KW-1262">Eukaryotic host gene expression shutoff by virus</keyword>
<keyword id="KW-1193">Eukaryotic host translation shutoff by virus</keyword>
<keyword id="KW-1190">Host gene expression shutoff by virus</keyword>
<keyword id="KW-0945">Host-virus interaction</keyword>
<keyword id="KW-0378">Hydrolase</keyword>
<keyword id="KW-0449">Lipoprotein</keyword>
<keyword id="KW-0460">Magnesium</keyword>
<keyword id="KW-0479">Metal-binding</keyword>
<keyword id="KW-0511">Multifunctional enzyme</keyword>
<keyword id="KW-0519">Myristate</keyword>
<keyword id="KW-0540">Nuclease</keyword>
<keyword id="KW-0548">Nucleotidyltransferase</keyword>
<keyword id="KW-0597">Phosphoprotein</keyword>
<keyword id="KW-0645">Protease</keyword>
<keyword id="KW-1185">Reference proteome</keyword>
<keyword id="KW-0677">Repeat</keyword>
<keyword id="KW-0688">Ribosomal frameshifting</keyword>
<keyword id="KW-0695">RNA-directed DNA polymerase</keyword>
<keyword id="KW-0808">Transferase</keyword>
<keyword id="KW-1179">Viral genome integration</keyword>
<keyword id="KW-0543">Viral nucleoprotein</keyword>
<keyword id="KW-0946">Virion</keyword>
<keyword id="KW-1160">Virus entry into host cell</keyword>
<keyword id="KW-0862">Zinc</keyword>
<keyword id="KW-0863">Zinc-finger</keyword>
<proteinExistence type="evidence at protein level"/>
<sequence length="1462" mass="162686">MGQIFSRSASPIPRPPRGLAAHHWLNFLQAAYRLEPGPSSYDFHQLKKFLKIALETPVWICPINYSLLASLLPKGYPGRVNEILHILIQTQAQIPSRPAPPPPSSSTHDPPDSDPQIPPPYVEPTAPQVLPVMHPHGAPPNHRPWQMKDLQAIKQEVSQAAPGSPQFMQTIRLAVQQFDPTAKDLQDLLQYLCSSLVASLHHQQLDSLISEAETRGITGYNPLAGPLRVQANNPQQQGLRREYQQLWLAAFAALPGSAKDPSWASILQGLEEPYHAFVERLNIALDNGLPEGTPKDPILRSLAYSNANKECQKLLQARGHTNSPLGDMLRACQAWTPKDKTKVLVVQPKKPPPNQPCFRCGKAGHWSRDCTQPRPPPGPCPLCQDPTHWKRDCPRLKPTIPEPEPEEDALLLDLPADIPHPKNLHRGGGLTSPPTLQQVLPNQDPTSILPVIPLDPARRPVIKAQIDTQTSHPKTIEALLDTGADMTVLPIALFSSNTPLKNTSVLGAGGQTQDHFKLTSLPVLIRLPFRTTPIVLTSCLVDTKNNWAIIGRDALQQCQGVLYLPEAKRPPVILPIQAPAVLGLEHLPRPPEISQFPLNPERLQALQHLVRKALEAGHIEPYTGPGNNPVFPVKKANGTWRFIHDLRATNSLTIDLSSSSPGPPDLSSLPTTLAHLQTIDLKDAFFQIPLPKQFQPYFAFTVPQQCNYGPGTRYAWRVLPQGFKNSPTLFEMQLAHILQPIRQAFPQCTILQYMDDILLASPSHADLQLLSEATMASLISHGLPVSENKTQQTPGTIKFLGQIISPNHLTYDAVPKVPIRSRWALPELQALLGEIQWVSKGTPTLRQPLHSLYCALQRHTDPRDQIYLNPSQVQSLVQLRQALSQNCRSRLVQTLPLLGAIMLTLTGTTTVVFQSKQQWPLVWLHAPLPHTSQCPWGQLLASAVLLLDKYTLQSYGLLCQTIHHNISTQTFNQFIQTSDHPSVPILLHHSHRFKNLGAQTGELWNTFLKTTAPLAPVKALMPVFTLSPVIINTAPCLFSDGSTSQAAYILWDKHILSQRSFPLPPPHKSAQRAELLGLLHGLSSARSWRCLNIFLDSKYLYHYLRTLALGTFQGRSSQAPFQALLPRLLSRKVVYLHHVRSHTNLPDPISRLNALTDALLITPVLQLSPADLHSFTHCGQTALTLQGATTTEASNILRSCHACRKNNPQHQMPQGHIRRGLLPNHIWQGDITHFKYKNTLYRLHVWVDTFSGAISATQKRKETSSEAISSLLQAIAYLGKPSYINTDNGPAYISQDFLNMCTSLAIRHTTHVPYNPTSSGLVERSNGILKTLLYKYFTDKPDLPMDNALSIALWTINHLNVLTNCHKTRWQLHHSPRLQPIPETHSLSNKQTHWYYFKLPGLNSRQWKGPQEALQEAAGAALIPVSASSAQWIPWRLLKRAACPRPVGGPADPKEKDHQHHG</sequence>
<comment type="function">
    <molecule>Gag-Pro-Pol polyprotein</molecule>
    <text evidence="2">The matrix domain targets Gag, Gag-Pro and Gag-Pro-Pol polyproteins to the plasma membrane via a multipartite membrane binding signal, that includes its myristoylated N-terminus.</text>
</comment>
<comment type="function">
    <molecule>Matrix protein p19</molecule>
    <text evidence="2">Matrix protein.</text>
</comment>
<comment type="function">
    <molecule>Capsid protein p24</molecule>
    <text evidence="3">Forms the spherical core of the virus that encapsulates the genomic RNA-nucleocapsid complex.</text>
</comment>
<comment type="function">
    <molecule>Nucleocapsid protein p15-pro</molecule>
    <text evidence="2">Binds strongly to viral nucleic acids and promote their aggregation. Also destabilizes the nucleic acids duplexes via highly structured zinc-binding motifs.</text>
</comment>
<comment type="function">
    <molecule>Protease</molecule>
    <text evidence="3 7">The aspartyl protease mediates proteolytic cleavages of Gag and Gag-Pol polyproteins during or shortly after the release of the virion from the plasma membrane. Cleavages take place as an ordered, step-wise cascade to yield mature proteins. This process is called maturation. Displays maximal activity during the budding process just prior to particle release from the cell (Potential). Cleaves the translation initiation factor eIF4G leading to the inhibition of host cap-dependent translation (By similarity).</text>
</comment>
<comment type="function">
    <molecule>Reverse transcriptase/ribonuclease H, p49 subunit</molecule>
    <text evidence="1">RT is a multifunctional enzyme that converts the viral RNA genome into dsDNA in the cytoplasm, shortly after virus entry into the cell. This enzyme displays a DNA polymerase activity that can copy either DNA or RNA templates, and a ribonuclease H (RNase H) activity that cleaves the RNA strand of RNA-DNA heteroduplexes in a partially processive 3' to 5'-endonucleasic mode. Conversion of viral genomic RNA into dsDNA requires many steps. A tRNA-Pro binds to the primer-binding site (PBS) situated at the 5'-end of the viral RNA. RT uses the 3' end of the tRNA primer to perform a short round of RNA-dependent minus-strand DNA synthesis. The reading proceeds through the U5 region and ends after the repeated (R) region which is present at both ends of viral RNA. The portion of the RNA-DNA heteroduplex is digested by the RNase H, resulting in a ssDNA product attached to the tRNA primer. This ssDNA/tRNA hybridizes with the identical R region situated at the 3' end of viral RNA. This template exchange, known as minus-strand DNA strong stop transfer, can be either intra- or intermolecular. RT uses the 3' end of this newly synthesized short ssDNA to perform the RNA-dependent minus-strand DNA synthesis of the whole template. RNase H digests the RNA template except for a polypurine tract (PPT) situated at the 5' end of the genome. It is not clear if both polymerase and RNase H activities are simultaneous. RNase H probably can proceed both in a polymerase-dependent (RNA cut into small fragments by the same RT performing DNA synthesis) and a polymerase-independent mode (cleavage of remaining RNA fragments by free RTs). Secondly, RT performs DNA-directed plus-strand DNA synthesis using the PPT that has not been removed by RNase H as primer. PPT and tRNA primers are then removed by RNase H. The 3' and 5' ssDNA PBS regions hybridize to form a circular dsDNA intermediate. Strand displacement synthesis by RT to the PBS and PPT ends produces a blunt ended, linear dsDNA copy of the viral genome that includes long terminal repeats (LTRs) at both ends (By similarity).</text>
</comment>
<comment type="function">
    <molecule>Reverse transcriptase/ribonuclease H, p62 subunit</molecule>
    <text evidence="1">RT is a multifunctional enzyme that converts the viral RNA genome into dsDNA in the cytoplasm, shortly after virus entry into the cell. This enzyme displays a DNA polymerase activity that can copy either DNA or RNA templates, and a ribonuclease H (RNase H) activity that cleaves the RNA strand of RNA-DNA heteroduplexes in a partially processive 3' to 5'-endonucleasic mode. Conversion of viral genomic RNA into dsDNA requires many steps. A tRNA-Pro binds to the primer-binding site (PBS) situated at the 5'-end of the viral RNA. RT uses the 3' end of the tRNA primer to perform a short round of RNA-dependent minus-strand DNA synthesis. The reading proceeds through the U5 region and ends after the repeated (R) region which is present at both ends of viral RNA. The portion of the RNA-DNA heteroduplex is digested by the RNase H, resulting in a ssDNA product attached to the tRNA primer. This ssDNA/tRNA hybridizes with the identical R region situated at the 3' end of viral RNA. This template exchange, known as minus-strand DNA strong stop transfer, can be either intra- or intermolecular. RT uses the 3' end of this newly synthesized short ssDNA to perform the RNA-dependent minus-strand DNA synthesis of the whole template. RNase H digests the RNA template except for a polypurine tract (PPT) situated at the 5' end of the genome. It is not clear if both polymerase and RNase H activities are simultaneous. RNase H probably can proceed both in a polymerase-dependent (RNA cut into small fragments by the same RT performing DNA synthesis) and a polymerase-independent mode (cleavage of remaining RNA fragments by free RTs). Secondly, RT performs DNA-directed plus-strand DNA synthesis using the PPT that has not been removed by RNase H as primer. PPT and tRNA primers are then removed by RNase H. The 3' and 5' ssDNA PBS regions hybridize to form a circular dsDNA intermediate. Strand displacement synthesis by RT to the PBS and PPT ends produces a blunt ended, linear dsDNA copy of the viral genome that includes long terminal repeats (LTRs) at both ends (By similarity).</text>
</comment>
<comment type="function">
    <molecule>Integrase</molecule>
    <text evidence="3">Catalyzes viral DNA integration into the host chromosome, by performing a series of DNA cutting and joining reactions.</text>
</comment>
<comment type="catalytic activity">
    <reaction evidence="9">
        <text>Endonucleolytic cleavage to 5'-phosphomonoester.</text>
        <dbReference type="EC" id="3.1.26.4"/>
    </reaction>
</comment>
<comment type="catalytic activity">
    <reaction evidence="8">
        <text>DNA(n) + a 2'-deoxyribonucleoside 5'-triphosphate = DNA(n+1) + diphosphate</text>
        <dbReference type="Rhea" id="RHEA:22508"/>
        <dbReference type="Rhea" id="RHEA-COMP:17339"/>
        <dbReference type="Rhea" id="RHEA-COMP:17340"/>
        <dbReference type="ChEBI" id="CHEBI:33019"/>
        <dbReference type="ChEBI" id="CHEBI:61560"/>
        <dbReference type="ChEBI" id="CHEBI:173112"/>
        <dbReference type="EC" id="2.7.7.49"/>
    </reaction>
</comment>
<comment type="catalytic activity">
    <reaction evidence="8">
        <text>DNA(n) + a 2'-deoxyribonucleoside 5'-triphosphate = DNA(n+1) + diphosphate</text>
        <dbReference type="Rhea" id="RHEA:22508"/>
        <dbReference type="Rhea" id="RHEA-COMP:17339"/>
        <dbReference type="Rhea" id="RHEA-COMP:17340"/>
        <dbReference type="ChEBI" id="CHEBI:33019"/>
        <dbReference type="ChEBI" id="CHEBI:61560"/>
        <dbReference type="ChEBI" id="CHEBI:173112"/>
        <dbReference type="EC" id="2.7.7.7"/>
    </reaction>
</comment>
<comment type="cofactor">
    <cofactor evidence="8">
        <name>Mg(2+)</name>
        <dbReference type="ChEBI" id="CHEBI:18420"/>
    </cofactor>
    <text evidence="8">The RT polymerase active site binds 2 magnesium ions.</text>
</comment>
<comment type="cofactor">
    <cofactor evidence="1">
        <name>Mg(2+)</name>
        <dbReference type="ChEBI" id="CHEBI:18420"/>
    </cofactor>
    <text evidence="1">Binds 2 magnesium ions for ribonuclease H (RNase H) activity.</text>
</comment>
<comment type="subunit">
    <molecule>Gag-Pro-Pol polyprotein</molecule>
    <text evidence="2">Homodimer; the homodimers are part of the immature particles. Interacts with human TSG101 and NEDD4; these interactions are essential for budding and release of viral particles.</text>
</comment>
<comment type="subunit">
    <molecule>Matrix protein p19</molecule>
    <text evidence="2">Homodimer; further assembles as homohexamers.</text>
</comment>
<comment type="subcellular location">
    <molecule>Matrix protein p19</molecule>
    <subcellularLocation>
        <location evidence="2">Virion</location>
    </subcellularLocation>
</comment>
<comment type="subcellular location">
    <molecule>Capsid protein p24</molecule>
    <subcellularLocation>
        <location evidence="2">Virion</location>
    </subcellularLocation>
</comment>
<comment type="subcellular location">
    <molecule>Nucleocapsid protein p15-pro</molecule>
    <subcellularLocation>
        <location evidence="2">Virion</location>
    </subcellularLocation>
</comment>
<comment type="alternative products">
    <event type="ribosomal frameshifting"/>
    <isoform>
        <id>P14078-1</id>
        <name>Gag-Pol polyprotein</name>
        <sequence type="displayed"/>
    </isoform>
    <isoform>
        <id>P14074-1</id>
        <name>Gag-Pro polyprotein</name>
        <sequence type="external"/>
    </isoform>
    <isoform>
        <id>P14076-1</id>
        <name>Gag polyprotein</name>
        <sequence type="external"/>
    </isoform>
    <text evidence="13">This strategy of translation probably allows the virus to modulate the quantity of each viral protein.</text>
</comment>
<comment type="domain">
    <text evidence="2">Gag polyprotein: Late-budding domains (L domains) are short sequence motifs essential for viral particle release. They can occur individually or in close proximity within structural proteins. They interacts with sorting cellular proteins of the multivesicular body (MVB) pathway. Most of these proteins are class E vacuolar protein sorting factors belonging to ESCRT-I, ESCRT-II or ESCRT-III complexes. Matrix protein p19 contains two L domains: a PTAP/PSAP motif which interacts with the UEV domain of TSG101, and a PPXY motif which binds to the WW domains of the ubiquitin ligase NEDD4.</text>
</comment>
<comment type="domain">
    <molecule>Capsid protein p24</molecule>
    <text evidence="3">The capsid protein N-terminus seems to be involved in Gag-Gag interactions.</text>
</comment>
<comment type="PTM">
    <molecule>Matrix protein p19</molecule>
    <text evidence="2">Phosphorylation of the matrix protein p19 by MAPK1 seems to play a role in budding.</text>
</comment>
<comment type="PTM">
    <molecule>Gag-Pro-Pol polyprotein</molecule>
    <text evidence="2">Myristoylated. Myristoylation of the matrix (MA) domain mediates the transport and binding of Gag polyproteins to the host plasma membrane and is required for the assembly of viral particles.</text>
</comment>
<comment type="PTM">
    <molecule>Gag-Pro-Pol polyprotein</molecule>
    <text evidence="3">Specific enzymatic cleavages by the viral protease yield mature proteins. The polyprotein is cleaved during and after budding, this process is termed maturation. The protease is autoproteolytically processed at its N- and C-termini.</text>
</comment>
<comment type="miscellaneous">
    <text evidence="8">Reverse transcriptase/ribonuclease H: The reverse transcriptase is an error-prone enzyme that lacks a proof-reading function. High mutations rate is a direct consequence of this characteristic. RT also displays frequent template switching leading to high recombination rate. Recombination mostly occurs between homologous regions of the two copackaged RNA genomes. If these two RNA molecules derive from different viral strains, reverse transcription will give rise to highly recombinated proviral DNAs.</text>
</comment>
<comment type="miscellaneous">
    <text evidence="13">HTLV-1 lineages are divided in four clades, A (Cosmopolitan), B (Central African group), C (Melanesian group) and D (New Central African group).</text>
</comment>
<comment type="miscellaneous">
    <molecule>Isoform Gag-Pol polyprotein</molecule>
    <text evidence="13">Produced by -1 ribosomal frameshifting at the gag-pol genes boundary.</text>
</comment>
<comment type="sequence caution" evidence="13">
    <conflict type="erroneous gene model prediction">
        <sequence resource="EMBL-CDS" id="BAA02931"/>
    </conflict>
</comment>
<organism>
    <name type="scientific">Human T-cell leukemia virus 1 (isolate Caribbea HS-35 subtype A)</name>
    <name type="common">HTLV-1</name>
    <dbReference type="NCBI Taxonomy" id="11927"/>
    <lineage>
        <taxon>Viruses</taxon>
        <taxon>Riboviria</taxon>
        <taxon>Pararnavirae</taxon>
        <taxon>Artverviricota</taxon>
        <taxon>Revtraviricetes</taxon>
        <taxon>Ortervirales</taxon>
        <taxon>Retroviridae</taxon>
        <taxon>Orthoretrovirinae</taxon>
        <taxon>Deltaretrovirus</taxon>
        <taxon>Primate T-lymphotropic virus 1</taxon>
    </lineage>
</organism>
<evidence type="ECO:0000250" key="1"/>
<evidence type="ECO:0000250" key="2">
    <source>
        <dbReference type="UniProtKB" id="P03345"/>
    </source>
</evidence>
<evidence type="ECO:0000250" key="3">
    <source>
        <dbReference type="UniProtKB" id="P03362"/>
    </source>
</evidence>
<evidence type="ECO:0000250" key="4">
    <source>
        <dbReference type="UniProtKB" id="P03363"/>
    </source>
</evidence>
<evidence type="ECO:0000255" key="5"/>
<evidence type="ECO:0000255" key="6">
    <source>
        <dbReference type="PROSITE-ProRule" id="PRU00047"/>
    </source>
</evidence>
<evidence type="ECO:0000255" key="7">
    <source>
        <dbReference type="PROSITE-ProRule" id="PRU00275"/>
    </source>
</evidence>
<evidence type="ECO:0000255" key="8">
    <source>
        <dbReference type="PROSITE-ProRule" id="PRU00405"/>
    </source>
</evidence>
<evidence type="ECO:0000255" key="9">
    <source>
        <dbReference type="PROSITE-ProRule" id="PRU00408"/>
    </source>
</evidence>
<evidence type="ECO:0000255" key="10">
    <source>
        <dbReference type="PROSITE-ProRule" id="PRU00457"/>
    </source>
</evidence>
<evidence type="ECO:0000255" key="11">
    <source>
        <dbReference type="PROSITE-ProRule" id="PRU00506"/>
    </source>
</evidence>
<evidence type="ECO:0000256" key="12">
    <source>
        <dbReference type="SAM" id="MobiDB-lite"/>
    </source>
</evidence>
<evidence type="ECO:0000305" key="13"/>
<accession>P14078</accession>
<accession>O56228</accession>
<name>POL_HTL1C</name>
<organismHost>
    <name type="scientific">Homo sapiens</name>
    <name type="common">Human</name>
    <dbReference type="NCBI Taxonomy" id="9606"/>
</organismHost>
<gene>
    <name type="primary">gag-pro-pol</name>
</gene>
<dbReference type="EC" id="3.4.23.-" evidence="7"/>
<dbReference type="EC" id="2.7.7.49" evidence="8"/>
<dbReference type="EC" id="2.7.7.7" evidence="8"/>
<dbReference type="EC" id="3.1.26.4" evidence="9"/>
<dbReference type="EC" id="2.7.7.-" evidence="4"/>
<dbReference type="EC" id="3.1.-.-" evidence="4"/>
<dbReference type="EMBL" id="D13784">
    <property type="protein sequence ID" value="BAA02931.1"/>
    <property type="status" value="ALT_SEQ"/>
    <property type="molecule type" value="Genomic_DNA"/>
</dbReference>
<dbReference type="EMBL" id="AF033817">
    <property type="protein sequence ID" value="AAC82581.1"/>
    <property type="molecule type" value="Genomic_DNA"/>
</dbReference>
<dbReference type="PIR" id="C28136">
    <property type="entry name" value="GNLJCN"/>
</dbReference>
<dbReference type="RefSeq" id="NP_057860.1">
    <property type="nucleotide sequence ID" value="NC_001436.1"/>
</dbReference>
<dbReference type="PDB" id="4ZNY">
    <property type="method" value="X-ray"/>
    <property type="resolution" value="2.40 A"/>
    <property type="chains" value="B=121-130"/>
</dbReference>
<dbReference type="PDB" id="6VOY">
    <property type="method" value="EM"/>
    <property type="resolution" value="3.70 A"/>
    <property type="chains" value="A/B/C/D=1168-1462"/>
</dbReference>
<dbReference type="PDBsum" id="4ZNY"/>
<dbReference type="PDBsum" id="6VOY"/>
<dbReference type="BMRB" id="P14078"/>
<dbReference type="SMR" id="P14078"/>
<dbReference type="ELM" id="P14078"/>
<dbReference type="MEROPS" id="A02.012"/>
<dbReference type="KEGG" id="vg:1724740"/>
<dbReference type="Proteomes" id="UP000001061">
    <property type="component" value="Segment"/>
</dbReference>
<dbReference type="Proteomes" id="UP000110593">
    <property type="component" value="Genome"/>
</dbReference>
<dbReference type="GO" id="GO:0019013">
    <property type="term" value="C:viral nucleocapsid"/>
    <property type="evidence" value="ECO:0007669"/>
    <property type="project" value="UniProtKB-KW"/>
</dbReference>
<dbReference type="GO" id="GO:0004190">
    <property type="term" value="F:aspartic-type endopeptidase activity"/>
    <property type="evidence" value="ECO:0007669"/>
    <property type="project" value="UniProtKB-KW"/>
</dbReference>
<dbReference type="GO" id="GO:0003677">
    <property type="term" value="F:DNA binding"/>
    <property type="evidence" value="ECO:0007669"/>
    <property type="project" value="UniProtKB-KW"/>
</dbReference>
<dbReference type="GO" id="GO:0003887">
    <property type="term" value="F:DNA-directed DNA polymerase activity"/>
    <property type="evidence" value="ECO:0007669"/>
    <property type="project" value="UniProtKB-EC"/>
</dbReference>
<dbReference type="GO" id="GO:0035613">
    <property type="term" value="F:RNA stem-loop binding"/>
    <property type="evidence" value="ECO:0007669"/>
    <property type="project" value="TreeGrafter"/>
</dbReference>
<dbReference type="GO" id="GO:0003964">
    <property type="term" value="F:RNA-directed DNA polymerase activity"/>
    <property type="evidence" value="ECO:0007669"/>
    <property type="project" value="UniProtKB-KW"/>
</dbReference>
<dbReference type="GO" id="GO:0004523">
    <property type="term" value="F:RNA-DNA hybrid ribonuclease activity"/>
    <property type="evidence" value="ECO:0007669"/>
    <property type="project" value="UniProtKB-EC"/>
</dbReference>
<dbReference type="GO" id="GO:0005198">
    <property type="term" value="F:structural molecule activity"/>
    <property type="evidence" value="ECO:0007669"/>
    <property type="project" value="InterPro"/>
</dbReference>
<dbReference type="GO" id="GO:0008270">
    <property type="term" value="F:zinc ion binding"/>
    <property type="evidence" value="ECO:0007669"/>
    <property type="project" value="UniProtKB-KW"/>
</dbReference>
<dbReference type="GO" id="GO:0015074">
    <property type="term" value="P:DNA integration"/>
    <property type="evidence" value="ECO:0007669"/>
    <property type="project" value="UniProtKB-KW"/>
</dbReference>
<dbReference type="GO" id="GO:0006310">
    <property type="term" value="P:DNA recombination"/>
    <property type="evidence" value="ECO:0007669"/>
    <property type="project" value="UniProtKB-KW"/>
</dbReference>
<dbReference type="GO" id="GO:0075713">
    <property type="term" value="P:establishment of integrated proviral latency"/>
    <property type="evidence" value="ECO:0007669"/>
    <property type="project" value="UniProtKB-KW"/>
</dbReference>
<dbReference type="GO" id="GO:0006508">
    <property type="term" value="P:proteolysis"/>
    <property type="evidence" value="ECO:0007669"/>
    <property type="project" value="UniProtKB-KW"/>
</dbReference>
<dbReference type="GO" id="GO:0046718">
    <property type="term" value="P:symbiont entry into host cell"/>
    <property type="evidence" value="ECO:0007669"/>
    <property type="project" value="UniProtKB-KW"/>
</dbReference>
<dbReference type="GO" id="GO:0039657">
    <property type="term" value="P:symbiont-mediated suppression of host gene expression"/>
    <property type="evidence" value="ECO:0007669"/>
    <property type="project" value="UniProtKB-KW"/>
</dbReference>
<dbReference type="GO" id="GO:0044826">
    <property type="term" value="P:viral genome integration into host DNA"/>
    <property type="evidence" value="ECO:0007669"/>
    <property type="project" value="UniProtKB-KW"/>
</dbReference>
<dbReference type="GO" id="GO:0075523">
    <property type="term" value="P:viral translational frameshifting"/>
    <property type="evidence" value="ECO:0007669"/>
    <property type="project" value="UniProtKB-KW"/>
</dbReference>
<dbReference type="FunFam" id="1.10.185.10:FF:000001">
    <property type="entry name" value="Gag polyprotein"/>
    <property type="match status" value="1"/>
</dbReference>
<dbReference type="Gene3D" id="1.10.1200.30">
    <property type="match status" value="1"/>
</dbReference>
<dbReference type="Gene3D" id="3.30.70.270">
    <property type="match status" value="2"/>
</dbReference>
<dbReference type="Gene3D" id="2.40.70.10">
    <property type="entry name" value="Acid Proteases"/>
    <property type="match status" value="1"/>
</dbReference>
<dbReference type="Gene3D" id="1.10.185.10">
    <property type="entry name" value="Delta-retroviral matrix"/>
    <property type="match status" value="1"/>
</dbReference>
<dbReference type="Gene3D" id="3.10.10.10">
    <property type="entry name" value="HIV Type 1 Reverse Transcriptase, subunit A, domain 1"/>
    <property type="match status" value="1"/>
</dbReference>
<dbReference type="Gene3D" id="1.10.375.10">
    <property type="entry name" value="Human Immunodeficiency Virus Type 1 Capsid Protein"/>
    <property type="match status" value="1"/>
</dbReference>
<dbReference type="Gene3D" id="3.30.420.10">
    <property type="entry name" value="Ribonuclease H-like superfamily/Ribonuclease H"/>
    <property type="match status" value="2"/>
</dbReference>
<dbReference type="Gene3D" id="4.10.60.10">
    <property type="entry name" value="Zinc finger, CCHC-type"/>
    <property type="match status" value="1"/>
</dbReference>
<dbReference type="InterPro" id="IPR001969">
    <property type="entry name" value="Aspartic_peptidase_AS"/>
</dbReference>
<dbReference type="InterPro" id="IPR003139">
    <property type="entry name" value="D_retro_matrix"/>
</dbReference>
<dbReference type="InterPro" id="IPR043502">
    <property type="entry name" value="DNA/RNA_pol_sf"/>
</dbReference>
<dbReference type="InterPro" id="IPR045345">
    <property type="entry name" value="Gag_p24_C"/>
</dbReference>
<dbReference type="InterPro" id="IPR036862">
    <property type="entry name" value="Integrase_C_dom_sf_retrovir"/>
</dbReference>
<dbReference type="InterPro" id="IPR001037">
    <property type="entry name" value="Integrase_C_retrovir"/>
</dbReference>
<dbReference type="InterPro" id="IPR001584">
    <property type="entry name" value="Integrase_cat-core"/>
</dbReference>
<dbReference type="InterPro" id="IPR003308">
    <property type="entry name" value="Integrase_Zn-bd_dom_N"/>
</dbReference>
<dbReference type="InterPro" id="IPR001995">
    <property type="entry name" value="Peptidase_A2_cat"/>
</dbReference>
<dbReference type="InterPro" id="IPR021109">
    <property type="entry name" value="Peptidase_aspartic_dom_sf"/>
</dbReference>
<dbReference type="InterPro" id="IPR018061">
    <property type="entry name" value="Retropepsins"/>
</dbReference>
<dbReference type="InterPro" id="IPR008916">
    <property type="entry name" value="Retrov_capsid_C"/>
</dbReference>
<dbReference type="InterPro" id="IPR008919">
    <property type="entry name" value="Retrov_capsid_N"/>
</dbReference>
<dbReference type="InterPro" id="IPR010999">
    <property type="entry name" value="Retrovr_matrix"/>
</dbReference>
<dbReference type="InterPro" id="IPR043128">
    <property type="entry name" value="Rev_trsase/Diguanyl_cyclase"/>
</dbReference>
<dbReference type="InterPro" id="IPR012337">
    <property type="entry name" value="RNaseH-like_sf"/>
</dbReference>
<dbReference type="InterPro" id="IPR002156">
    <property type="entry name" value="RNaseH_domain"/>
</dbReference>
<dbReference type="InterPro" id="IPR036397">
    <property type="entry name" value="RNaseH_sf"/>
</dbReference>
<dbReference type="InterPro" id="IPR000477">
    <property type="entry name" value="RT_dom"/>
</dbReference>
<dbReference type="InterPro" id="IPR001878">
    <property type="entry name" value="Znf_CCHC"/>
</dbReference>
<dbReference type="InterPro" id="IPR036875">
    <property type="entry name" value="Znf_CCHC_sf"/>
</dbReference>
<dbReference type="PANTHER" id="PTHR41694">
    <property type="entry name" value="ENDOGENOUS RETROVIRUS GROUP K MEMBER POL PROTEIN"/>
    <property type="match status" value="1"/>
</dbReference>
<dbReference type="PANTHER" id="PTHR41694:SF3">
    <property type="entry name" value="RNA-DIRECTED DNA POLYMERASE-RELATED"/>
    <property type="match status" value="1"/>
</dbReference>
<dbReference type="Pfam" id="PF02228">
    <property type="entry name" value="Gag_p19"/>
    <property type="match status" value="1"/>
</dbReference>
<dbReference type="Pfam" id="PF00607">
    <property type="entry name" value="Gag_p24"/>
    <property type="match status" value="1"/>
</dbReference>
<dbReference type="Pfam" id="PF19317">
    <property type="entry name" value="Gag_p24_C"/>
    <property type="match status" value="1"/>
</dbReference>
<dbReference type="Pfam" id="PF00552">
    <property type="entry name" value="IN_DBD_C"/>
    <property type="match status" value="1"/>
</dbReference>
<dbReference type="Pfam" id="PF02022">
    <property type="entry name" value="Integrase_Zn"/>
    <property type="match status" value="1"/>
</dbReference>
<dbReference type="Pfam" id="PF00075">
    <property type="entry name" value="RNase_H"/>
    <property type="match status" value="1"/>
</dbReference>
<dbReference type="Pfam" id="PF00665">
    <property type="entry name" value="rve"/>
    <property type="match status" value="1"/>
</dbReference>
<dbReference type="Pfam" id="PF00077">
    <property type="entry name" value="RVP"/>
    <property type="match status" value="1"/>
</dbReference>
<dbReference type="Pfam" id="PF00078">
    <property type="entry name" value="RVT_1"/>
    <property type="match status" value="1"/>
</dbReference>
<dbReference type="Pfam" id="PF00098">
    <property type="entry name" value="zf-CCHC"/>
    <property type="match status" value="1"/>
</dbReference>
<dbReference type="SMART" id="SM00343">
    <property type="entry name" value="ZnF_C2HC"/>
    <property type="match status" value="2"/>
</dbReference>
<dbReference type="SUPFAM" id="SSF50630">
    <property type="entry name" value="Acid proteases"/>
    <property type="match status" value="1"/>
</dbReference>
<dbReference type="SUPFAM" id="SSF50122">
    <property type="entry name" value="DNA-binding domain of retroviral integrase"/>
    <property type="match status" value="1"/>
</dbReference>
<dbReference type="SUPFAM" id="SSF56672">
    <property type="entry name" value="DNA/RNA polymerases"/>
    <property type="match status" value="1"/>
</dbReference>
<dbReference type="SUPFAM" id="SSF47836">
    <property type="entry name" value="Retroviral matrix proteins"/>
    <property type="match status" value="1"/>
</dbReference>
<dbReference type="SUPFAM" id="SSF47353">
    <property type="entry name" value="Retrovirus capsid dimerization domain-like"/>
    <property type="match status" value="1"/>
</dbReference>
<dbReference type="SUPFAM" id="SSF47943">
    <property type="entry name" value="Retrovirus capsid protein, N-terminal core domain"/>
    <property type="match status" value="1"/>
</dbReference>
<dbReference type="SUPFAM" id="SSF57756">
    <property type="entry name" value="Retrovirus zinc finger-like domains"/>
    <property type="match status" value="1"/>
</dbReference>
<dbReference type="SUPFAM" id="SSF53098">
    <property type="entry name" value="Ribonuclease H-like"/>
    <property type="match status" value="1"/>
</dbReference>
<dbReference type="PROSITE" id="PS50175">
    <property type="entry name" value="ASP_PROT_RETROV"/>
    <property type="match status" value="1"/>
</dbReference>
<dbReference type="PROSITE" id="PS00141">
    <property type="entry name" value="ASP_PROTEASE"/>
    <property type="match status" value="1"/>
</dbReference>
<dbReference type="PROSITE" id="PS50994">
    <property type="entry name" value="INTEGRASE"/>
    <property type="match status" value="1"/>
</dbReference>
<dbReference type="PROSITE" id="PS51027">
    <property type="entry name" value="INTEGRASE_DBD"/>
    <property type="match status" value="1"/>
</dbReference>
<dbReference type="PROSITE" id="PS50879">
    <property type="entry name" value="RNASE_H_1"/>
    <property type="match status" value="1"/>
</dbReference>
<dbReference type="PROSITE" id="PS50878">
    <property type="entry name" value="RT_POL"/>
    <property type="match status" value="1"/>
</dbReference>
<dbReference type="PROSITE" id="PS50158">
    <property type="entry name" value="ZF_CCHC"/>
    <property type="match status" value="1"/>
</dbReference>
<feature type="initiator methionine" description="Removed; by host" evidence="5">
    <location>
        <position position="1"/>
    </location>
</feature>
<feature type="chain" id="PRO_0000259940" description="Gag-Pro-Pol polyprotein">
    <location>
        <begin position="2"/>
        <end position="1462"/>
    </location>
</feature>
<feature type="chain" id="PRO_0000259941" description="Matrix protein p19">
    <location>
        <begin position="2"/>
        <end position="130"/>
    </location>
</feature>
<feature type="chain" id="PRO_0000259942" description="Capsid protein p24">
    <location>
        <begin position="131"/>
        <end position="344"/>
    </location>
</feature>
<feature type="chain" id="PRO_0000259943" description="Nucleocapsid protein p15-pro">
    <location>
        <begin position="345"/>
        <end position="449"/>
    </location>
</feature>
<feature type="chain" id="PRO_0000259944" description="Protease">
    <location>
        <begin position="450"/>
        <end position="574"/>
    </location>
</feature>
<feature type="peptide" id="PRO_0000259945" description="p1">
    <location>
        <begin position="575"/>
        <end position="582"/>
    </location>
</feature>
<feature type="chain" id="PRO_0000038875" description="Reverse transcriptase/ribonuclease H, p62 subunit">
    <location>
        <begin position="583"/>
        <end position="1167"/>
    </location>
</feature>
<feature type="chain" id="PRO_0000442548" description="Reverse transcriptase/ribonuclease H, p49 subunit">
    <location>
        <begin position="583"/>
        <end position="1021"/>
    </location>
</feature>
<feature type="chain" id="PRO_0000038876" description="Integrase">
    <location>
        <begin position="1168"/>
        <end position="1462"/>
    </location>
</feature>
<feature type="domain" description="Peptidase A2" evidence="7">
    <location>
        <begin position="476"/>
        <end position="554"/>
    </location>
</feature>
<feature type="domain" description="Reverse transcriptase" evidence="8">
    <location>
        <begin position="614"/>
        <end position="804"/>
    </location>
</feature>
<feature type="domain" description="RNase H type-1" evidence="9">
    <location>
        <begin position="1031"/>
        <end position="1165"/>
    </location>
</feature>
<feature type="domain" description="Integrase catalytic" evidence="10">
    <location>
        <begin position="1219"/>
        <end position="1388"/>
    </location>
</feature>
<feature type="zinc finger region" description="CCHC-type 1" evidence="6">
    <location>
        <begin position="355"/>
        <end position="372"/>
    </location>
</feature>
<feature type="zinc finger region" description="CCHC-type 2" evidence="6">
    <location>
        <begin position="378"/>
        <end position="395"/>
    </location>
</feature>
<feature type="DNA-binding region" description="Integrase-type" evidence="11">
    <location>
        <begin position="1393"/>
        <end position="1443"/>
    </location>
</feature>
<feature type="region of interest" description="Disordered" evidence="12">
    <location>
        <begin position="93"/>
        <end position="142"/>
    </location>
</feature>
<feature type="short sequence motif" description="PPXY motif" evidence="2">
    <location>
        <begin position="118"/>
        <end position="121"/>
    </location>
</feature>
<feature type="short sequence motif" description="PTAP/PSAP motif" evidence="2">
    <location>
        <begin position="124"/>
        <end position="127"/>
    </location>
</feature>
<feature type="active site" description="Protease; shared with dimeric partner" evidence="7">
    <location>
        <position position="481"/>
    </location>
</feature>
<feature type="binding site" evidence="8">
    <location>
        <position position="680"/>
    </location>
    <ligand>
        <name>Mg(2+)</name>
        <dbReference type="ChEBI" id="CHEBI:18420"/>
        <label>1</label>
        <note>catalytic; for reverse transcriptase activity</note>
    </ligand>
</feature>
<feature type="binding site" evidence="8">
    <location>
        <position position="755"/>
    </location>
    <ligand>
        <name>Mg(2+)</name>
        <dbReference type="ChEBI" id="CHEBI:18420"/>
        <label>1</label>
        <note>catalytic; for reverse transcriptase activity</note>
    </ligand>
</feature>
<feature type="binding site" evidence="8">
    <location>
        <position position="756"/>
    </location>
    <ligand>
        <name>Mg(2+)</name>
        <dbReference type="ChEBI" id="CHEBI:18420"/>
        <label>1</label>
        <note>catalytic; for reverse transcriptase activity</note>
    </ligand>
</feature>
<feature type="binding site" evidence="9">
    <location>
        <position position="1040"/>
    </location>
    <ligand>
        <name>Mg(2+)</name>
        <dbReference type="ChEBI" id="CHEBI:18420"/>
        <label>2</label>
        <note>catalytic; for RNase H activity</note>
    </ligand>
</feature>
<feature type="binding site" evidence="9">
    <location>
        <position position="1074"/>
    </location>
    <ligand>
        <name>Mg(2+)</name>
        <dbReference type="ChEBI" id="CHEBI:18420"/>
        <label>2</label>
        <note>catalytic; for RNase H activity</note>
    </ligand>
</feature>
<feature type="binding site" evidence="9">
    <location>
        <position position="1096"/>
    </location>
    <ligand>
        <name>Mg(2+)</name>
        <dbReference type="ChEBI" id="CHEBI:18420"/>
        <label>2</label>
        <note>catalytic; for RNase H activity</note>
    </ligand>
</feature>
<feature type="binding site" evidence="9">
    <location>
        <position position="1157"/>
    </location>
    <ligand>
        <name>Mg(2+)</name>
        <dbReference type="ChEBI" id="CHEBI:18420"/>
        <label>2</label>
        <note>catalytic; for RNase H activity</note>
    </ligand>
</feature>
<feature type="binding site" evidence="10">
    <location>
        <position position="1230"/>
    </location>
    <ligand>
        <name>Mg(2+)</name>
        <dbReference type="ChEBI" id="CHEBI:18420"/>
        <label>3</label>
        <note>catalytic; for integrase activity</note>
    </ligand>
</feature>
<feature type="binding site" evidence="10">
    <location>
        <position position="1287"/>
    </location>
    <ligand>
        <name>Mg(2+)</name>
        <dbReference type="ChEBI" id="CHEBI:18420"/>
        <label>3</label>
        <note>catalytic; for integrase activity</note>
    </ligand>
</feature>
<feature type="site" description="Cleavage; by viral protease" evidence="3">
    <location>
        <begin position="130"/>
        <end position="131"/>
    </location>
</feature>
<feature type="site" description="Cleavage; by viral protease" evidence="3">
    <location>
        <begin position="344"/>
        <end position="345"/>
    </location>
</feature>
<feature type="site" description="Cleavage; by viral protease" evidence="3">
    <location>
        <begin position="449"/>
        <end position="450"/>
    </location>
</feature>
<feature type="site" description="Cleavage; by viral protease" evidence="3">
    <location>
        <begin position="574"/>
        <end position="575"/>
    </location>
</feature>
<feature type="site" description="Cleavage; by viral protease" evidence="3">
    <location>
        <begin position="582"/>
        <end position="583"/>
    </location>
</feature>
<feature type="site" description="Cleavage; by viral protease" evidence="3">
    <location>
        <begin position="1021"/>
        <end position="1022"/>
    </location>
</feature>
<feature type="site" description="Cleavage; by viral protease" evidence="3">
    <location>
        <begin position="1167"/>
        <end position="1168"/>
    </location>
</feature>
<feature type="modified residue" description="Phosphoserine; by host MAPK1" evidence="2">
    <location>
        <position position="105"/>
    </location>
</feature>
<feature type="lipid moiety-binding region" description="N-myristoyl glycine; by host" evidence="5">
    <location>
        <position position="2"/>
    </location>
</feature>